<evidence type="ECO:0000255" key="1">
    <source>
        <dbReference type="HAMAP-Rule" id="MF_00366"/>
    </source>
</evidence>
<reference key="1">
    <citation type="journal article" date="2006" name="J. Bacteriol.">
        <title>Complete genome sequence of Yersinia pestis strains Antiqua and Nepal516: evidence of gene reduction in an emerging pathogen.</title>
        <authorList>
            <person name="Chain P.S.G."/>
            <person name="Hu P."/>
            <person name="Malfatti S.A."/>
            <person name="Radnedge L."/>
            <person name="Larimer F."/>
            <person name="Vergez L.M."/>
            <person name="Worsham P."/>
            <person name="Chu M.C."/>
            <person name="Andersen G.L."/>
        </authorList>
    </citation>
    <scope>NUCLEOTIDE SEQUENCE [LARGE SCALE GENOMIC DNA]</scope>
    <source>
        <strain>Antiqua</strain>
    </source>
</reference>
<feature type="chain" id="PRO_1000006039" description="DNA-directed RNA polymerase subunit omega">
    <location>
        <begin position="1"/>
        <end position="91"/>
    </location>
</feature>
<name>RPOZ_YERPA</name>
<keyword id="KW-0240">DNA-directed RNA polymerase</keyword>
<keyword id="KW-0548">Nucleotidyltransferase</keyword>
<keyword id="KW-0804">Transcription</keyword>
<keyword id="KW-0808">Transferase</keyword>
<protein>
    <recommendedName>
        <fullName evidence="1">DNA-directed RNA polymerase subunit omega</fullName>
        <shortName evidence="1">RNAP omega subunit</shortName>
        <ecNumber evidence="1">2.7.7.6</ecNumber>
    </recommendedName>
    <alternativeName>
        <fullName evidence="1">RNA polymerase omega subunit</fullName>
    </alternativeName>
    <alternativeName>
        <fullName evidence="1">Transcriptase subunit omega</fullName>
    </alternativeName>
</protein>
<accession>Q1C257</accession>
<sequence length="91" mass="10164">MARVTVQDAVEKIGNRFDLVLVAARRARQIQSGGKDALVPEENDKVTVIALREIEEGLITNQILDVRERQEQQEQQAAEIQAVTAIAEGRR</sequence>
<proteinExistence type="inferred from homology"/>
<dbReference type="EC" id="2.7.7.6" evidence="1"/>
<dbReference type="EMBL" id="CP000308">
    <property type="protein sequence ID" value="ABG15465.1"/>
    <property type="molecule type" value="Genomic_DNA"/>
</dbReference>
<dbReference type="RefSeq" id="WP_002209001.1">
    <property type="nucleotide sequence ID" value="NZ_CP009906.1"/>
</dbReference>
<dbReference type="SMR" id="Q1C257"/>
<dbReference type="GeneID" id="57974551"/>
<dbReference type="KEGG" id="ypa:YPA_3503"/>
<dbReference type="Proteomes" id="UP000001971">
    <property type="component" value="Chromosome"/>
</dbReference>
<dbReference type="GO" id="GO:0000428">
    <property type="term" value="C:DNA-directed RNA polymerase complex"/>
    <property type="evidence" value="ECO:0007669"/>
    <property type="project" value="UniProtKB-KW"/>
</dbReference>
<dbReference type="GO" id="GO:0003677">
    <property type="term" value="F:DNA binding"/>
    <property type="evidence" value="ECO:0007669"/>
    <property type="project" value="UniProtKB-UniRule"/>
</dbReference>
<dbReference type="GO" id="GO:0003899">
    <property type="term" value="F:DNA-directed RNA polymerase activity"/>
    <property type="evidence" value="ECO:0007669"/>
    <property type="project" value="UniProtKB-UniRule"/>
</dbReference>
<dbReference type="GO" id="GO:0006351">
    <property type="term" value="P:DNA-templated transcription"/>
    <property type="evidence" value="ECO:0007669"/>
    <property type="project" value="UniProtKB-UniRule"/>
</dbReference>
<dbReference type="FunFam" id="3.90.940.10:FF:000001">
    <property type="entry name" value="DNA-directed RNA polymerase subunit omega"/>
    <property type="match status" value="1"/>
</dbReference>
<dbReference type="Gene3D" id="3.90.940.10">
    <property type="match status" value="1"/>
</dbReference>
<dbReference type="HAMAP" id="MF_00366">
    <property type="entry name" value="RNApol_bact_RpoZ"/>
    <property type="match status" value="1"/>
</dbReference>
<dbReference type="InterPro" id="IPR003716">
    <property type="entry name" value="DNA-dir_RNA_pol_omega"/>
</dbReference>
<dbReference type="InterPro" id="IPR006110">
    <property type="entry name" value="Pol_omega/Rpo6/RPB6"/>
</dbReference>
<dbReference type="InterPro" id="IPR036161">
    <property type="entry name" value="RPB6/omega-like_sf"/>
</dbReference>
<dbReference type="NCBIfam" id="TIGR00690">
    <property type="entry name" value="rpoZ"/>
    <property type="match status" value="1"/>
</dbReference>
<dbReference type="PANTHER" id="PTHR34476">
    <property type="entry name" value="DNA-DIRECTED RNA POLYMERASE SUBUNIT OMEGA"/>
    <property type="match status" value="1"/>
</dbReference>
<dbReference type="PANTHER" id="PTHR34476:SF1">
    <property type="entry name" value="DNA-DIRECTED RNA POLYMERASE SUBUNIT OMEGA"/>
    <property type="match status" value="1"/>
</dbReference>
<dbReference type="Pfam" id="PF01192">
    <property type="entry name" value="RNA_pol_Rpb6"/>
    <property type="match status" value="1"/>
</dbReference>
<dbReference type="SMART" id="SM01409">
    <property type="entry name" value="RNA_pol_Rpb6"/>
    <property type="match status" value="1"/>
</dbReference>
<dbReference type="SUPFAM" id="SSF63562">
    <property type="entry name" value="RPB6/omega subunit-like"/>
    <property type="match status" value="1"/>
</dbReference>
<organism>
    <name type="scientific">Yersinia pestis bv. Antiqua (strain Antiqua)</name>
    <dbReference type="NCBI Taxonomy" id="360102"/>
    <lineage>
        <taxon>Bacteria</taxon>
        <taxon>Pseudomonadati</taxon>
        <taxon>Pseudomonadota</taxon>
        <taxon>Gammaproteobacteria</taxon>
        <taxon>Enterobacterales</taxon>
        <taxon>Yersiniaceae</taxon>
        <taxon>Yersinia</taxon>
    </lineage>
</organism>
<comment type="function">
    <text evidence="1">Promotes RNA polymerase assembly. Latches the N- and C-terminal regions of the beta' subunit thereby facilitating its interaction with the beta and alpha subunits.</text>
</comment>
<comment type="catalytic activity">
    <reaction evidence="1">
        <text>RNA(n) + a ribonucleoside 5'-triphosphate = RNA(n+1) + diphosphate</text>
        <dbReference type="Rhea" id="RHEA:21248"/>
        <dbReference type="Rhea" id="RHEA-COMP:14527"/>
        <dbReference type="Rhea" id="RHEA-COMP:17342"/>
        <dbReference type="ChEBI" id="CHEBI:33019"/>
        <dbReference type="ChEBI" id="CHEBI:61557"/>
        <dbReference type="ChEBI" id="CHEBI:140395"/>
        <dbReference type="EC" id="2.7.7.6"/>
    </reaction>
</comment>
<comment type="subunit">
    <text evidence="1">The RNAP catalytic core consists of 2 alpha, 1 beta, 1 beta' and 1 omega subunit. When a sigma factor is associated with the core the holoenzyme is formed, which can initiate transcription.</text>
</comment>
<comment type="similarity">
    <text evidence="1">Belongs to the RNA polymerase subunit omega family.</text>
</comment>
<gene>
    <name evidence="1" type="primary">rpoZ</name>
    <name type="ordered locus">YPA_3503</name>
</gene>